<sequence length="182" mass="20503">MFKYIGDIVKGTGTQLRSLVMVFGHGFRKRDTLQYPEEQVYLPPRYRGRIVLTRDPDGEERCVACNLCAVACPVGCISLQKAETEDGRWYPDFFRINFSRCIFCGLCEEACPTTAIQLTPDFEMAEFKRQDLVYEKEDLLISGPGKNPDYNFYRVAGMAVAGKPKGAAQNEAEPINVKSLLP</sequence>
<reference key="1">
    <citation type="journal article" date="2009" name="Genome Biol.">
        <title>Genomic and genetic analyses of diversity and plant interactions of Pseudomonas fluorescens.</title>
        <authorList>
            <person name="Silby M.W."/>
            <person name="Cerdeno-Tarraga A.M."/>
            <person name="Vernikos G.S."/>
            <person name="Giddens S.R."/>
            <person name="Jackson R.W."/>
            <person name="Preston G.M."/>
            <person name="Zhang X.-X."/>
            <person name="Moon C.D."/>
            <person name="Gehrig S.M."/>
            <person name="Godfrey S.A.C."/>
            <person name="Knight C.G."/>
            <person name="Malone J.G."/>
            <person name="Robinson Z."/>
            <person name="Spiers A.J."/>
            <person name="Harris S."/>
            <person name="Challis G.L."/>
            <person name="Yaxley A.M."/>
            <person name="Harris D."/>
            <person name="Seeger K."/>
            <person name="Murphy L."/>
            <person name="Rutter S."/>
            <person name="Squares R."/>
            <person name="Quail M.A."/>
            <person name="Saunders E."/>
            <person name="Mavromatis K."/>
            <person name="Brettin T.S."/>
            <person name="Bentley S.D."/>
            <person name="Hothersall J."/>
            <person name="Stephens E."/>
            <person name="Thomas C.M."/>
            <person name="Parkhill J."/>
            <person name="Levy S.B."/>
            <person name="Rainey P.B."/>
            <person name="Thomson N.R."/>
        </authorList>
    </citation>
    <scope>NUCLEOTIDE SEQUENCE [LARGE SCALE GENOMIC DNA]</scope>
    <source>
        <strain>Pf0-1</strain>
    </source>
</reference>
<keyword id="KW-0004">4Fe-4S</keyword>
<keyword id="KW-0997">Cell inner membrane</keyword>
<keyword id="KW-1003">Cell membrane</keyword>
<keyword id="KW-0408">Iron</keyword>
<keyword id="KW-0411">Iron-sulfur</keyword>
<keyword id="KW-0472">Membrane</keyword>
<keyword id="KW-0479">Metal-binding</keyword>
<keyword id="KW-0520">NAD</keyword>
<keyword id="KW-0874">Quinone</keyword>
<keyword id="KW-0677">Repeat</keyword>
<keyword id="KW-1278">Translocase</keyword>
<keyword id="KW-0830">Ubiquinone</keyword>
<accession>Q3KA56</accession>
<comment type="function">
    <text evidence="1">NDH-1 shuttles electrons from NADH, via FMN and iron-sulfur (Fe-S) centers, to quinones in the respiratory chain. The immediate electron acceptor for the enzyme in this species is believed to be ubiquinone. Couples the redox reaction to proton translocation (for every two electrons transferred, four hydrogen ions are translocated across the cytoplasmic membrane), and thus conserves the redox energy in a proton gradient.</text>
</comment>
<comment type="catalytic activity">
    <reaction evidence="1">
        <text>a quinone + NADH + 5 H(+)(in) = a quinol + NAD(+) + 4 H(+)(out)</text>
        <dbReference type="Rhea" id="RHEA:57888"/>
        <dbReference type="ChEBI" id="CHEBI:15378"/>
        <dbReference type="ChEBI" id="CHEBI:24646"/>
        <dbReference type="ChEBI" id="CHEBI:57540"/>
        <dbReference type="ChEBI" id="CHEBI:57945"/>
        <dbReference type="ChEBI" id="CHEBI:132124"/>
    </reaction>
</comment>
<comment type="cofactor">
    <cofactor evidence="1">
        <name>[4Fe-4S] cluster</name>
        <dbReference type="ChEBI" id="CHEBI:49883"/>
    </cofactor>
    <text evidence="1">Binds 2 [4Fe-4S] clusters per subunit.</text>
</comment>
<comment type="subunit">
    <text evidence="1">NDH-1 is composed of 13 different subunits. Subunits NuoA, H, J, K, L, M, N constitute the membrane sector of the complex.</text>
</comment>
<comment type="subcellular location">
    <subcellularLocation>
        <location evidence="1">Cell inner membrane</location>
        <topology evidence="1">Peripheral membrane protein</topology>
    </subcellularLocation>
</comment>
<comment type="similarity">
    <text evidence="1">Belongs to the complex I 23 kDa subunit family.</text>
</comment>
<gene>
    <name evidence="1" type="primary">nuoI</name>
    <name type="ordered locus">Pfl01_3610</name>
</gene>
<name>NUOI_PSEPF</name>
<evidence type="ECO:0000255" key="1">
    <source>
        <dbReference type="HAMAP-Rule" id="MF_01351"/>
    </source>
</evidence>
<proteinExistence type="inferred from homology"/>
<protein>
    <recommendedName>
        <fullName evidence="1">NADH-quinone oxidoreductase subunit I</fullName>
        <ecNumber evidence="1">7.1.1.-</ecNumber>
    </recommendedName>
    <alternativeName>
        <fullName evidence="1">NADH dehydrogenase I subunit I</fullName>
    </alternativeName>
    <alternativeName>
        <fullName evidence="1">NDH-1 subunit I</fullName>
    </alternativeName>
</protein>
<dbReference type="EC" id="7.1.1.-" evidence="1"/>
<dbReference type="EMBL" id="CP000094">
    <property type="protein sequence ID" value="ABA75348.1"/>
    <property type="molecule type" value="Genomic_DNA"/>
</dbReference>
<dbReference type="RefSeq" id="WP_011334960.1">
    <property type="nucleotide sequence ID" value="NC_007492.2"/>
</dbReference>
<dbReference type="SMR" id="Q3KA56"/>
<dbReference type="KEGG" id="pfo:Pfl01_3610"/>
<dbReference type="eggNOG" id="COG1143">
    <property type="taxonomic scope" value="Bacteria"/>
</dbReference>
<dbReference type="HOGENOM" id="CLU_067218_4_3_6"/>
<dbReference type="Proteomes" id="UP000002704">
    <property type="component" value="Chromosome"/>
</dbReference>
<dbReference type="GO" id="GO:0005886">
    <property type="term" value="C:plasma membrane"/>
    <property type="evidence" value="ECO:0007669"/>
    <property type="project" value="UniProtKB-SubCell"/>
</dbReference>
<dbReference type="GO" id="GO:0051539">
    <property type="term" value="F:4 iron, 4 sulfur cluster binding"/>
    <property type="evidence" value="ECO:0007669"/>
    <property type="project" value="UniProtKB-KW"/>
</dbReference>
<dbReference type="GO" id="GO:0005506">
    <property type="term" value="F:iron ion binding"/>
    <property type="evidence" value="ECO:0007669"/>
    <property type="project" value="UniProtKB-UniRule"/>
</dbReference>
<dbReference type="GO" id="GO:0050136">
    <property type="term" value="F:NADH:ubiquinone reductase (non-electrogenic) activity"/>
    <property type="evidence" value="ECO:0007669"/>
    <property type="project" value="UniProtKB-UniRule"/>
</dbReference>
<dbReference type="GO" id="GO:0048038">
    <property type="term" value="F:quinone binding"/>
    <property type="evidence" value="ECO:0007669"/>
    <property type="project" value="UniProtKB-KW"/>
</dbReference>
<dbReference type="GO" id="GO:0009060">
    <property type="term" value="P:aerobic respiration"/>
    <property type="evidence" value="ECO:0007669"/>
    <property type="project" value="TreeGrafter"/>
</dbReference>
<dbReference type="FunFam" id="3.30.70.3270:FF:000002">
    <property type="entry name" value="NADH-quinone oxidoreductase subunit I"/>
    <property type="match status" value="1"/>
</dbReference>
<dbReference type="Gene3D" id="3.30.70.3270">
    <property type="match status" value="1"/>
</dbReference>
<dbReference type="HAMAP" id="MF_01351">
    <property type="entry name" value="NDH1_NuoI"/>
    <property type="match status" value="1"/>
</dbReference>
<dbReference type="InterPro" id="IPR017896">
    <property type="entry name" value="4Fe4S_Fe-S-bd"/>
</dbReference>
<dbReference type="InterPro" id="IPR017900">
    <property type="entry name" value="4Fe4S_Fe_S_CS"/>
</dbReference>
<dbReference type="InterPro" id="IPR010226">
    <property type="entry name" value="NADH_quinone_OxRdtase_chainI"/>
</dbReference>
<dbReference type="NCBIfam" id="TIGR01971">
    <property type="entry name" value="NuoI"/>
    <property type="match status" value="1"/>
</dbReference>
<dbReference type="NCBIfam" id="NF004536">
    <property type="entry name" value="PRK05888.1-1"/>
    <property type="match status" value="1"/>
</dbReference>
<dbReference type="PANTHER" id="PTHR10849:SF20">
    <property type="entry name" value="NADH DEHYDROGENASE [UBIQUINONE] IRON-SULFUR PROTEIN 8, MITOCHONDRIAL"/>
    <property type="match status" value="1"/>
</dbReference>
<dbReference type="PANTHER" id="PTHR10849">
    <property type="entry name" value="NADH DEHYDROGENASE UBIQUINONE IRON-SULFUR PROTEIN 8, MITOCHONDRIAL"/>
    <property type="match status" value="1"/>
</dbReference>
<dbReference type="Pfam" id="PF12838">
    <property type="entry name" value="Fer4_7"/>
    <property type="match status" value="1"/>
</dbReference>
<dbReference type="SUPFAM" id="SSF54862">
    <property type="entry name" value="4Fe-4S ferredoxins"/>
    <property type="match status" value="1"/>
</dbReference>
<dbReference type="PROSITE" id="PS00198">
    <property type="entry name" value="4FE4S_FER_1"/>
    <property type="match status" value="2"/>
</dbReference>
<dbReference type="PROSITE" id="PS51379">
    <property type="entry name" value="4FE4S_FER_2"/>
    <property type="match status" value="2"/>
</dbReference>
<organism>
    <name type="scientific">Pseudomonas fluorescens (strain Pf0-1)</name>
    <dbReference type="NCBI Taxonomy" id="205922"/>
    <lineage>
        <taxon>Bacteria</taxon>
        <taxon>Pseudomonadati</taxon>
        <taxon>Pseudomonadota</taxon>
        <taxon>Gammaproteobacteria</taxon>
        <taxon>Pseudomonadales</taxon>
        <taxon>Pseudomonadaceae</taxon>
        <taxon>Pseudomonas</taxon>
    </lineage>
</organism>
<feature type="chain" id="PRO_0000245730" description="NADH-quinone oxidoreductase subunit I">
    <location>
        <begin position="1"/>
        <end position="182"/>
    </location>
</feature>
<feature type="domain" description="4Fe-4S ferredoxin-type 1" evidence="1">
    <location>
        <begin position="52"/>
        <end position="82"/>
    </location>
</feature>
<feature type="domain" description="4Fe-4S ferredoxin-type 2" evidence="1">
    <location>
        <begin position="92"/>
        <end position="121"/>
    </location>
</feature>
<feature type="binding site" evidence="1">
    <location>
        <position position="62"/>
    </location>
    <ligand>
        <name>[4Fe-4S] cluster</name>
        <dbReference type="ChEBI" id="CHEBI:49883"/>
        <label>1</label>
    </ligand>
</feature>
<feature type="binding site" evidence="1">
    <location>
        <position position="65"/>
    </location>
    <ligand>
        <name>[4Fe-4S] cluster</name>
        <dbReference type="ChEBI" id="CHEBI:49883"/>
        <label>1</label>
    </ligand>
</feature>
<feature type="binding site" evidence="1">
    <location>
        <position position="68"/>
    </location>
    <ligand>
        <name>[4Fe-4S] cluster</name>
        <dbReference type="ChEBI" id="CHEBI:49883"/>
        <label>1</label>
    </ligand>
</feature>
<feature type="binding site" evidence="1">
    <location>
        <position position="72"/>
    </location>
    <ligand>
        <name>[4Fe-4S] cluster</name>
        <dbReference type="ChEBI" id="CHEBI:49883"/>
        <label>2</label>
    </ligand>
</feature>
<feature type="binding site" evidence="1">
    <location>
        <position position="101"/>
    </location>
    <ligand>
        <name>[4Fe-4S] cluster</name>
        <dbReference type="ChEBI" id="CHEBI:49883"/>
        <label>2</label>
    </ligand>
</feature>
<feature type="binding site" evidence="1">
    <location>
        <position position="104"/>
    </location>
    <ligand>
        <name>[4Fe-4S] cluster</name>
        <dbReference type="ChEBI" id="CHEBI:49883"/>
        <label>2</label>
    </ligand>
</feature>
<feature type="binding site" evidence="1">
    <location>
        <position position="107"/>
    </location>
    <ligand>
        <name>[4Fe-4S] cluster</name>
        <dbReference type="ChEBI" id="CHEBI:49883"/>
        <label>2</label>
    </ligand>
</feature>
<feature type="binding site" evidence="1">
    <location>
        <position position="111"/>
    </location>
    <ligand>
        <name>[4Fe-4S] cluster</name>
        <dbReference type="ChEBI" id="CHEBI:49883"/>
        <label>1</label>
    </ligand>
</feature>